<accession>C4XNX1</accession>
<sequence>MFVTFEGVEGSGKSTQMTRLCAALEAAGRTVCRTRQPGGCFLGQTLRAILLSQKTAGLDDRAELFLYLADRAQHVAEVIRPALAAGQVVVCDRYTDSTVAYQGYGRGLDTTLLQNLNAVAAAGVVPDLTVLLDLDPAIGLTRATSRNAAAGTAEAEGRFEAERLEFHQRVRAGYRALAAAEPARFAVIDAAPSPDAVAEAVWGVVGKLL</sequence>
<comment type="function">
    <text evidence="1">Phosphorylation of dTMP to form dTDP in both de novo and salvage pathways of dTTP synthesis.</text>
</comment>
<comment type="catalytic activity">
    <reaction evidence="1">
        <text>dTMP + ATP = dTDP + ADP</text>
        <dbReference type="Rhea" id="RHEA:13517"/>
        <dbReference type="ChEBI" id="CHEBI:30616"/>
        <dbReference type="ChEBI" id="CHEBI:58369"/>
        <dbReference type="ChEBI" id="CHEBI:63528"/>
        <dbReference type="ChEBI" id="CHEBI:456216"/>
        <dbReference type="EC" id="2.7.4.9"/>
    </reaction>
</comment>
<comment type="similarity">
    <text evidence="1">Belongs to the thymidylate kinase family.</text>
</comment>
<protein>
    <recommendedName>
        <fullName evidence="1">Thymidylate kinase</fullName>
        <ecNumber evidence="1">2.7.4.9</ecNumber>
    </recommendedName>
    <alternativeName>
        <fullName evidence="1">dTMP kinase</fullName>
    </alternativeName>
</protein>
<organism>
    <name type="scientific">Solidesulfovibrio magneticus (strain ATCC 700980 / DSM 13731 / RS-1)</name>
    <name type="common">Desulfovibrio magneticus</name>
    <dbReference type="NCBI Taxonomy" id="573370"/>
    <lineage>
        <taxon>Bacteria</taxon>
        <taxon>Pseudomonadati</taxon>
        <taxon>Thermodesulfobacteriota</taxon>
        <taxon>Desulfovibrionia</taxon>
        <taxon>Desulfovibrionales</taxon>
        <taxon>Desulfovibrionaceae</taxon>
        <taxon>Solidesulfovibrio</taxon>
    </lineage>
</organism>
<proteinExistence type="inferred from homology"/>
<keyword id="KW-0067">ATP-binding</keyword>
<keyword id="KW-0418">Kinase</keyword>
<keyword id="KW-0545">Nucleotide biosynthesis</keyword>
<keyword id="KW-0547">Nucleotide-binding</keyword>
<keyword id="KW-0808">Transferase</keyword>
<evidence type="ECO:0000255" key="1">
    <source>
        <dbReference type="HAMAP-Rule" id="MF_00165"/>
    </source>
</evidence>
<dbReference type="EC" id="2.7.4.9" evidence="1"/>
<dbReference type="EMBL" id="AP010904">
    <property type="protein sequence ID" value="BAH77472.1"/>
    <property type="molecule type" value="Genomic_DNA"/>
</dbReference>
<dbReference type="RefSeq" id="WP_015862607.1">
    <property type="nucleotide sequence ID" value="NC_012796.1"/>
</dbReference>
<dbReference type="SMR" id="C4XNX1"/>
<dbReference type="STRING" id="573370.DMR_39810"/>
<dbReference type="KEGG" id="dma:DMR_39810"/>
<dbReference type="eggNOG" id="COG0125">
    <property type="taxonomic scope" value="Bacteria"/>
</dbReference>
<dbReference type="HOGENOM" id="CLU_049131_0_0_7"/>
<dbReference type="OrthoDB" id="9774907at2"/>
<dbReference type="Proteomes" id="UP000009071">
    <property type="component" value="Chromosome"/>
</dbReference>
<dbReference type="GO" id="GO:0005829">
    <property type="term" value="C:cytosol"/>
    <property type="evidence" value="ECO:0007669"/>
    <property type="project" value="TreeGrafter"/>
</dbReference>
<dbReference type="GO" id="GO:0005524">
    <property type="term" value="F:ATP binding"/>
    <property type="evidence" value="ECO:0007669"/>
    <property type="project" value="UniProtKB-UniRule"/>
</dbReference>
<dbReference type="GO" id="GO:0004798">
    <property type="term" value="F:dTMP kinase activity"/>
    <property type="evidence" value="ECO:0007669"/>
    <property type="project" value="UniProtKB-UniRule"/>
</dbReference>
<dbReference type="GO" id="GO:0006233">
    <property type="term" value="P:dTDP biosynthetic process"/>
    <property type="evidence" value="ECO:0007669"/>
    <property type="project" value="InterPro"/>
</dbReference>
<dbReference type="GO" id="GO:0006235">
    <property type="term" value="P:dTTP biosynthetic process"/>
    <property type="evidence" value="ECO:0007669"/>
    <property type="project" value="UniProtKB-UniRule"/>
</dbReference>
<dbReference type="GO" id="GO:0006227">
    <property type="term" value="P:dUDP biosynthetic process"/>
    <property type="evidence" value="ECO:0007669"/>
    <property type="project" value="TreeGrafter"/>
</dbReference>
<dbReference type="CDD" id="cd01672">
    <property type="entry name" value="TMPK"/>
    <property type="match status" value="1"/>
</dbReference>
<dbReference type="FunFam" id="3.40.50.300:FF:000225">
    <property type="entry name" value="Thymidylate kinase"/>
    <property type="match status" value="1"/>
</dbReference>
<dbReference type="Gene3D" id="3.40.50.300">
    <property type="entry name" value="P-loop containing nucleotide triphosphate hydrolases"/>
    <property type="match status" value="1"/>
</dbReference>
<dbReference type="HAMAP" id="MF_00165">
    <property type="entry name" value="Thymidylate_kinase"/>
    <property type="match status" value="1"/>
</dbReference>
<dbReference type="InterPro" id="IPR027417">
    <property type="entry name" value="P-loop_NTPase"/>
</dbReference>
<dbReference type="InterPro" id="IPR039430">
    <property type="entry name" value="Thymidylate_kin-like_dom"/>
</dbReference>
<dbReference type="InterPro" id="IPR018095">
    <property type="entry name" value="Thymidylate_kin_CS"/>
</dbReference>
<dbReference type="InterPro" id="IPR018094">
    <property type="entry name" value="Thymidylate_kinase"/>
</dbReference>
<dbReference type="NCBIfam" id="TIGR00041">
    <property type="entry name" value="DTMP_kinase"/>
    <property type="match status" value="1"/>
</dbReference>
<dbReference type="PANTHER" id="PTHR10344">
    <property type="entry name" value="THYMIDYLATE KINASE"/>
    <property type="match status" value="1"/>
</dbReference>
<dbReference type="PANTHER" id="PTHR10344:SF4">
    <property type="entry name" value="UMP-CMP KINASE 2, MITOCHONDRIAL"/>
    <property type="match status" value="1"/>
</dbReference>
<dbReference type="Pfam" id="PF02223">
    <property type="entry name" value="Thymidylate_kin"/>
    <property type="match status" value="1"/>
</dbReference>
<dbReference type="SUPFAM" id="SSF52540">
    <property type="entry name" value="P-loop containing nucleoside triphosphate hydrolases"/>
    <property type="match status" value="1"/>
</dbReference>
<dbReference type="PROSITE" id="PS01331">
    <property type="entry name" value="THYMIDYLATE_KINASE"/>
    <property type="match status" value="1"/>
</dbReference>
<feature type="chain" id="PRO_1000203613" description="Thymidylate kinase">
    <location>
        <begin position="1"/>
        <end position="209"/>
    </location>
</feature>
<feature type="binding site" evidence="1">
    <location>
        <begin position="7"/>
        <end position="14"/>
    </location>
    <ligand>
        <name>ATP</name>
        <dbReference type="ChEBI" id="CHEBI:30616"/>
    </ligand>
</feature>
<gene>
    <name evidence="1" type="primary">tmk</name>
    <name type="ordered locus">DMR_39810</name>
</gene>
<reference key="1">
    <citation type="journal article" date="2009" name="Genome Res.">
        <title>Whole genome sequence of Desulfovibrio magneticus strain RS-1 revealed common gene clusters in magnetotactic bacteria.</title>
        <authorList>
            <person name="Nakazawa H."/>
            <person name="Arakaki A."/>
            <person name="Narita-Yamada S."/>
            <person name="Yashiro I."/>
            <person name="Jinno K."/>
            <person name="Aoki N."/>
            <person name="Tsuruyama A."/>
            <person name="Okamura Y."/>
            <person name="Tanikawa S."/>
            <person name="Fujita N."/>
            <person name="Takeyama H."/>
            <person name="Matsunaga T."/>
        </authorList>
    </citation>
    <scope>NUCLEOTIDE SEQUENCE [LARGE SCALE GENOMIC DNA]</scope>
    <source>
        <strain>ATCC 700980 / DSM 13731 / RS-1</strain>
    </source>
</reference>
<name>KTHY_SOLM1</name>